<reference key="1">
    <citation type="journal article" date="2014" name="ChemBioChem">
        <title>Unique crystal structure of a novel surfactant protein from the foam nest of the frog Leptodactylus vastus.</title>
        <authorList>
            <person name="Cavalcante Hissa D."/>
            <person name="Arruda Bezerra G."/>
            <person name="Birner-Gruenberger R."/>
            <person name="Paulino Silva L."/>
            <person name="Uson I."/>
            <person name="Gruber K."/>
            <person name="Maciel Melo V.M."/>
        </authorList>
    </citation>
    <scope>PROTEIN SEQUENCE</scope>
    <scope>X-RAY CRYSTALLOGRAPHY (1.60 ANGSTROMS)</scope>
    <scope>FUNCTION</scope>
    <scope>SUBUNIT</scope>
    <scope>SUBCELLULAR LOCATION</scope>
    <scope>DISULFIDE BONDS</scope>
    <scope>IDENTIFICATION BY MASS SPECTROMETRY</scope>
    <source>
        <tissue evidence="5">Foam nest</tissue>
    </source>
</reference>
<reference evidence="7" key="2">
    <citation type="journal article" date="2008" name="J. Exp. Biol.">
        <title>Novel surfactant proteins are involved in the structure and stability of foam nests from the frog Leptodactylus vastus.</title>
        <authorList>
            <person name="Hissa D.C."/>
            <person name="Vasconcelos I.M."/>
            <person name="Carvalho A.F.U."/>
            <person name="Nogueira V.L.R."/>
            <person name="Cascon P."/>
            <person name="Antunes A.S.L."/>
            <person name="de Macedo G.R."/>
            <person name="Melo V.M.M."/>
        </authorList>
    </citation>
    <scope>PROTEIN SEQUENCE OF 1-25</scope>
    <scope>FUNCTION</scope>
    <scope>SUBUNIT</scope>
    <scope>SUBCELLULAR LOCATION</scope>
    <source>
        <tissue evidence="1">Foam nest</tissue>
    </source>
</reference>
<reference key="3">
    <citation type="journal article" date="2016" name="J. Exp. Zool. Part A Ecol. Genet. Physiol.">
        <title>Frog Foam Nest Protein Diversity and Synthesis.</title>
        <authorList>
            <person name="Hissa D.C."/>
            <person name="Bezerra W.M."/>
            <person name="Freitas C.D."/>
            <person name="Ramos M.V."/>
            <person name="Lopes J.L."/>
            <person name="Beltramini L.M."/>
            <person name="Roberto I.J."/>
            <person name="Cascon P."/>
            <person name="Melo V.M."/>
        </authorList>
    </citation>
    <scope>FUNCTION</scope>
    <scope>BIOPHYSICOCHEMICAL PROPERTIES</scope>
    <scope>SUBCELLULAR LOCATION</scope>
    <scope>IDENTIFICATION BY MASS SPECTROMETRY</scope>
    <scope>TISSUE SPECIFICITY</scope>
    <source>
        <tissue evidence="6">Foam nest</tissue>
    </source>
</reference>
<proteinExistence type="evidence at protein level"/>
<name>RANSP_LEPVA</name>
<keyword id="KW-0002">3D-structure</keyword>
<keyword id="KW-0903">Direct protein sequencing</keyword>
<keyword id="KW-1015">Disulfide bond</keyword>
<keyword id="KW-0964">Secreted</keyword>
<feature type="chain" id="PRO_0000445589" description="Ranaspumin" evidence="2">
    <location>
        <begin position="1"/>
        <end position="217"/>
    </location>
</feature>
<feature type="disulfide bond" evidence="2 9">
    <location>
        <begin position="18"/>
        <end position="67"/>
    </location>
</feature>
<feature type="disulfide bond" evidence="2 9">
    <location>
        <begin position="38"/>
        <end position="114"/>
    </location>
</feature>
<feature type="disulfide bond" evidence="2 9">
    <location>
        <begin position="125"/>
        <end position="168"/>
    </location>
</feature>
<feature type="disulfide bond" evidence="2 9">
    <location>
        <begin position="146"/>
        <end position="207"/>
    </location>
</feature>
<feature type="unsure residue" description="N or D" evidence="5">
    <location>
        <position position="42"/>
    </location>
</feature>
<feature type="unsure residue" description="M or T" evidence="5">
    <location>
        <position position="120"/>
    </location>
</feature>
<feature type="unsure residue" description="N or Q" evidence="5">
    <location>
        <position position="123"/>
    </location>
</feature>
<feature type="helix" evidence="10">
    <location>
        <begin position="14"/>
        <end position="24"/>
    </location>
</feature>
<feature type="strand" evidence="10">
    <location>
        <begin position="25"/>
        <end position="28"/>
    </location>
</feature>
<feature type="helix" evidence="10">
    <location>
        <begin position="29"/>
        <end position="42"/>
    </location>
</feature>
<feature type="helix" evidence="10">
    <location>
        <begin position="48"/>
        <end position="64"/>
    </location>
</feature>
<feature type="helix" evidence="10">
    <location>
        <begin position="69"/>
        <end position="76"/>
    </location>
</feature>
<feature type="turn" evidence="10">
    <location>
        <begin position="77"/>
        <end position="79"/>
    </location>
</feature>
<feature type="strand" evidence="10">
    <location>
        <begin position="84"/>
        <end position="86"/>
    </location>
</feature>
<feature type="helix" evidence="10">
    <location>
        <begin position="89"/>
        <end position="102"/>
    </location>
</feature>
<feature type="helix" evidence="10">
    <location>
        <begin position="107"/>
        <end position="121"/>
    </location>
</feature>
<feature type="turn" evidence="10">
    <location>
        <begin position="122"/>
        <end position="124"/>
    </location>
</feature>
<feature type="helix" evidence="10">
    <location>
        <begin position="126"/>
        <end position="129"/>
    </location>
</feature>
<feature type="turn" evidence="10">
    <location>
        <begin position="130"/>
        <end position="132"/>
    </location>
</feature>
<feature type="helix" evidence="10">
    <location>
        <begin position="133"/>
        <end position="144"/>
    </location>
</feature>
<feature type="helix" evidence="10">
    <location>
        <begin position="152"/>
        <end position="165"/>
    </location>
</feature>
<feature type="helix" evidence="10">
    <location>
        <begin position="167"/>
        <end position="170"/>
    </location>
</feature>
<feature type="helix" evidence="10">
    <location>
        <begin position="175"/>
        <end position="180"/>
    </location>
</feature>
<feature type="strand" evidence="10">
    <location>
        <begin position="182"/>
        <end position="185"/>
    </location>
</feature>
<feature type="strand" evidence="10">
    <location>
        <begin position="188"/>
        <end position="191"/>
    </location>
</feature>
<feature type="helix" evidence="10">
    <location>
        <begin position="193"/>
        <end position="195"/>
    </location>
</feature>
<feature type="helix" evidence="10">
    <location>
        <begin position="196"/>
        <end position="204"/>
    </location>
</feature>
<feature type="helix" evidence="10">
    <location>
        <begin position="206"/>
        <end position="212"/>
    </location>
</feature>
<sequence>LLEGFLVGGGVPGPGTACLTKALKDSGDLLVELAVIICAYQNGKDLQEQDFKELKELLERTLERAGCALDDIVADLGLEELLGSIGVSTGDIIQGLYKLLKELKIDETVFNAVCDVTKKMLDNKCLPKILQGDLVKFLKDLKYKVCIEGGDPELIIKDLKIILERLPCVLGGVGLDDLFKNIFVKDGILSFEGIAKPLGDLLILVLCPNVKNINVSS</sequence>
<organism>
    <name type="scientific">Leptodactylus vastus</name>
    <name type="common">Northeastern pepper frog</name>
    <dbReference type="NCBI Taxonomy" id="326589"/>
    <lineage>
        <taxon>Eukaryota</taxon>
        <taxon>Metazoa</taxon>
        <taxon>Chordata</taxon>
        <taxon>Craniata</taxon>
        <taxon>Vertebrata</taxon>
        <taxon>Euteleostomi</taxon>
        <taxon>Amphibia</taxon>
        <taxon>Batrachia</taxon>
        <taxon>Anura</taxon>
        <taxon>Neobatrachia</taxon>
        <taxon>Hyloidea</taxon>
        <taxon>Leptodactylidae</taxon>
        <taxon>Leptodactylinae</taxon>
        <taxon>Leptodactylus</taxon>
    </lineage>
</organism>
<evidence type="ECO:0000269" key="1">
    <source>
    </source>
</evidence>
<evidence type="ECO:0000269" key="2">
    <source>
    </source>
</evidence>
<evidence type="ECO:0000269" key="3">
    <source>
    </source>
</evidence>
<evidence type="ECO:0000303" key="4">
    <source>
    </source>
</evidence>
<evidence type="ECO:0000303" key="5">
    <source>
    </source>
</evidence>
<evidence type="ECO:0000303" key="6">
    <source>
    </source>
</evidence>
<evidence type="ECO:0000305" key="7"/>
<evidence type="ECO:0000305" key="8">
    <source>
    </source>
</evidence>
<evidence type="ECO:0007744" key="9">
    <source>
        <dbReference type="PDB" id="4K82"/>
    </source>
</evidence>
<evidence type="ECO:0007829" key="10">
    <source>
        <dbReference type="PDB" id="4K82"/>
    </source>
</evidence>
<comment type="function">
    <text evidence="1 2 3">Acts as a surfactant (PubMed:18689424, PubMed:24442854). Is the major protein constituent (45%) of foam nests (PubMed:27460953). Has no antimicrobial activity, no larvicidal activity, and is not toxic to mice (PubMed:18689424).</text>
</comment>
<comment type="biophysicochemical properties">
    <temperatureDependence>
        <text evidence="3">Stable between 25 and 95 degrees Celsius.</text>
    </temperatureDependence>
</comment>
<comment type="subunit">
    <text evidence="1 2">Monomer.</text>
</comment>
<comment type="subcellular location">
    <subcellularLocation>
        <location evidence="1 2 3">Secreted</location>
    </subcellularLocation>
</comment>
<comment type="tissue specificity">
    <text evidence="3">Exclusively expressed in females in the early oviduct, the glandular part of the oviduct (pars convoluta dilata) and in the cloaca.</text>
</comment>
<comment type="miscellaneous">
    <text evidence="8">Mass spectrometry data suggest sequence microheterogeneity hinting at the existence of several isoforms.</text>
</comment>
<accession>P85507</accession>
<protein>
    <recommendedName>
        <fullName evidence="4">Ranaspumin</fullName>
    </recommendedName>
    <alternativeName>
        <fullName evidence="5">Lv-RSN-1</fullName>
    </alternativeName>
</protein>
<dbReference type="PDB" id="4K82">
    <property type="method" value="X-ray"/>
    <property type="resolution" value="1.60 A"/>
    <property type="chains" value="A=1-217"/>
</dbReference>
<dbReference type="PDB" id="4K83">
    <property type="method" value="X-ray"/>
    <property type="resolution" value="1.75 A"/>
    <property type="chains" value="A=1-217"/>
</dbReference>
<dbReference type="PDBsum" id="4K82"/>
<dbReference type="PDBsum" id="4K83"/>
<dbReference type="SMR" id="P85507"/>
<dbReference type="EvolutionaryTrace" id="P85507"/>
<dbReference type="GO" id="GO:0005576">
    <property type="term" value="C:extracellular region"/>
    <property type="evidence" value="ECO:0007669"/>
    <property type="project" value="UniProtKB-SubCell"/>
</dbReference>